<proteinExistence type="inferred from homology"/>
<accession>B0CAI0</accession>
<reference key="1">
    <citation type="journal article" date="2008" name="Proc. Natl. Acad. Sci. U.S.A.">
        <title>Niche adaptation and genome expansion in the chlorophyll d-producing cyanobacterium Acaryochloris marina.</title>
        <authorList>
            <person name="Swingley W.D."/>
            <person name="Chen M."/>
            <person name="Cheung P.C."/>
            <person name="Conrad A.L."/>
            <person name="Dejesa L.C."/>
            <person name="Hao J."/>
            <person name="Honchak B.M."/>
            <person name="Karbach L.E."/>
            <person name="Kurdoglu A."/>
            <person name="Lahiri S."/>
            <person name="Mastrian S.D."/>
            <person name="Miyashita H."/>
            <person name="Page L."/>
            <person name="Ramakrishna P."/>
            <person name="Satoh S."/>
            <person name="Sattley W.M."/>
            <person name="Shimada Y."/>
            <person name="Taylor H.L."/>
            <person name="Tomo T."/>
            <person name="Tsuchiya T."/>
            <person name="Wang Z.T."/>
            <person name="Raymond J."/>
            <person name="Mimuro M."/>
            <person name="Blankenship R.E."/>
            <person name="Touchman J.W."/>
        </authorList>
    </citation>
    <scope>NUCLEOTIDE SEQUENCE [LARGE SCALE GENOMIC DNA]</scope>
    <source>
        <strain>MBIC 11017</strain>
    </source>
</reference>
<dbReference type="EMBL" id="CP000828">
    <property type="protein sequence ID" value="ABW29046.1"/>
    <property type="molecule type" value="Genomic_DNA"/>
</dbReference>
<dbReference type="RefSeq" id="WP_012164397.1">
    <property type="nucleotide sequence ID" value="NC_009925.1"/>
</dbReference>
<dbReference type="SMR" id="B0CAI0"/>
<dbReference type="STRING" id="329726.AM1_4065"/>
<dbReference type="KEGG" id="amr:AM1_4065"/>
<dbReference type="eggNOG" id="COG0199">
    <property type="taxonomic scope" value="Bacteria"/>
</dbReference>
<dbReference type="HOGENOM" id="CLU_139869_0_0_3"/>
<dbReference type="OrthoDB" id="9810484at2"/>
<dbReference type="Proteomes" id="UP000000268">
    <property type="component" value="Chromosome"/>
</dbReference>
<dbReference type="GO" id="GO:0005737">
    <property type="term" value="C:cytoplasm"/>
    <property type="evidence" value="ECO:0007669"/>
    <property type="project" value="UniProtKB-ARBA"/>
</dbReference>
<dbReference type="GO" id="GO:0015935">
    <property type="term" value="C:small ribosomal subunit"/>
    <property type="evidence" value="ECO:0007669"/>
    <property type="project" value="TreeGrafter"/>
</dbReference>
<dbReference type="GO" id="GO:0019843">
    <property type="term" value="F:rRNA binding"/>
    <property type="evidence" value="ECO:0007669"/>
    <property type="project" value="UniProtKB-UniRule"/>
</dbReference>
<dbReference type="GO" id="GO:0003735">
    <property type="term" value="F:structural constituent of ribosome"/>
    <property type="evidence" value="ECO:0007669"/>
    <property type="project" value="InterPro"/>
</dbReference>
<dbReference type="GO" id="GO:0006412">
    <property type="term" value="P:translation"/>
    <property type="evidence" value="ECO:0007669"/>
    <property type="project" value="UniProtKB-UniRule"/>
</dbReference>
<dbReference type="FunFam" id="1.10.287.1480:FF:000001">
    <property type="entry name" value="30S ribosomal protein S14"/>
    <property type="match status" value="1"/>
</dbReference>
<dbReference type="Gene3D" id="1.10.287.1480">
    <property type="match status" value="1"/>
</dbReference>
<dbReference type="HAMAP" id="MF_00537">
    <property type="entry name" value="Ribosomal_uS14_1"/>
    <property type="match status" value="1"/>
</dbReference>
<dbReference type="InterPro" id="IPR001209">
    <property type="entry name" value="Ribosomal_uS14"/>
</dbReference>
<dbReference type="InterPro" id="IPR023036">
    <property type="entry name" value="Ribosomal_uS14_bac/plastid"/>
</dbReference>
<dbReference type="InterPro" id="IPR018271">
    <property type="entry name" value="Ribosomal_uS14_CS"/>
</dbReference>
<dbReference type="NCBIfam" id="NF006477">
    <property type="entry name" value="PRK08881.1"/>
    <property type="match status" value="1"/>
</dbReference>
<dbReference type="PANTHER" id="PTHR19836">
    <property type="entry name" value="30S RIBOSOMAL PROTEIN S14"/>
    <property type="match status" value="1"/>
</dbReference>
<dbReference type="PANTHER" id="PTHR19836:SF19">
    <property type="entry name" value="SMALL RIBOSOMAL SUBUNIT PROTEIN US14M"/>
    <property type="match status" value="1"/>
</dbReference>
<dbReference type="Pfam" id="PF00253">
    <property type="entry name" value="Ribosomal_S14"/>
    <property type="match status" value="1"/>
</dbReference>
<dbReference type="SUPFAM" id="SSF57716">
    <property type="entry name" value="Glucocorticoid receptor-like (DNA-binding domain)"/>
    <property type="match status" value="1"/>
</dbReference>
<dbReference type="PROSITE" id="PS00527">
    <property type="entry name" value="RIBOSOMAL_S14"/>
    <property type="match status" value="1"/>
</dbReference>
<organism>
    <name type="scientific">Acaryochloris marina (strain MBIC 11017)</name>
    <dbReference type="NCBI Taxonomy" id="329726"/>
    <lineage>
        <taxon>Bacteria</taxon>
        <taxon>Bacillati</taxon>
        <taxon>Cyanobacteriota</taxon>
        <taxon>Cyanophyceae</taxon>
        <taxon>Acaryochloridales</taxon>
        <taxon>Acaryochloridaceae</taxon>
        <taxon>Acaryochloris</taxon>
    </lineage>
</organism>
<protein>
    <recommendedName>
        <fullName evidence="1">Small ribosomal subunit protein uS14</fullName>
    </recommendedName>
    <alternativeName>
        <fullName evidence="2">30S ribosomal protein S14</fullName>
    </alternativeName>
</protein>
<sequence>MAKKGMVEREKKRQRLVAKYAHKRQALLEQISQASSQQERMDLHRQLQRLPRNSAPTRLRNRCWVTGRSRGYYRDFGLSRHVLREMAHEGLLPGVTKSSW</sequence>
<gene>
    <name evidence="1" type="primary">rpsN</name>
    <name evidence="1" type="synonym">rps14</name>
    <name type="ordered locus">AM1_4065</name>
</gene>
<feature type="chain" id="PRO_1000128271" description="Small ribosomal subunit protein uS14">
    <location>
        <begin position="1"/>
        <end position="100"/>
    </location>
</feature>
<comment type="function">
    <text evidence="1">Binds 16S rRNA, required for the assembly of 30S particles and may also be responsible for determining the conformation of the 16S rRNA at the A site.</text>
</comment>
<comment type="subunit">
    <text evidence="1">Part of the 30S ribosomal subunit. Contacts proteins S3 and S10.</text>
</comment>
<comment type="similarity">
    <text evidence="1">Belongs to the universal ribosomal protein uS14 family.</text>
</comment>
<name>RS14_ACAM1</name>
<evidence type="ECO:0000255" key="1">
    <source>
        <dbReference type="HAMAP-Rule" id="MF_00537"/>
    </source>
</evidence>
<evidence type="ECO:0000305" key="2"/>
<keyword id="KW-1185">Reference proteome</keyword>
<keyword id="KW-0687">Ribonucleoprotein</keyword>
<keyword id="KW-0689">Ribosomal protein</keyword>
<keyword id="KW-0694">RNA-binding</keyword>
<keyword id="KW-0699">rRNA-binding</keyword>